<evidence type="ECO:0000250" key="1">
    <source>
        <dbReference type="UniProtKB" id="P00785"/>
    </source>
</evidence>
<evidence type="ECO:0000250" key="2">
    <source>
        <dbReference type="UniProtKB" id="P07858"/>
    </source>
</evidence>
<evidence type="ECO:0000250" key="3">
    <source>
        <dbReference type="UniProtKB" id="P25250"/>
    </source>
</evidence>
<evidence type="ECO:0000250" key="4">
    <source>
        <dbReference type="UniProtKB" id="P80884"/>
    </source>
</evidence>
<evidence type="ECO:0000255" key="5"/>
<evidence type="ECO:0000255" key="6">
    <source>
        <dbReference type="PROSITE-ProRule" id="PRU00498"/>
    </source>
</evidence>
<evidence type="ECO:0000255" key="7">
    <source>
        <dbReference type="PROSITE-ProRule" id="PRU10088"/>
    </source>
</evidence>
<evidence type="ECO:0000255" key="8">
    <source>
        <dbReference type="PROSITE-ProRule" id="PRU10089"/>
    </source>
</evidence>
<evidence type="ECO:0000255" key="9">
    <source>
        <dbReference type="PROSITE-ProRule" id="PRU10090"/>
    </source>
</evidence>
<evidence type="ECO:0000255" key="10">
    <source>
        <dbReference type="PROSITE-ProRule" id="PRU10138"/>
    </source>
</evidence>
<gene>
    <name type="primary">SEN102</name>
</gene>
<reference key="1">
    <citation type="journal article" date="1995" name="Plant Mol. Biol.">
        <title>Up-regulation of a cysteine protease accompanies the ethylene-insensitive senescence of daylily (Hemerocallis) flowers.</title>
        <authorList>
            <person name="Valpuesta V."/>
            <person name="Lange N."/>
            <person name="Guerrero C."/>
            <person name="Reid M."/>
        </authorList>
    </citation>
    <scope>NUCLEOTIDE SEQUENCE [MRNA]</scope>
    <source>
        <strain>cv. Craddle Song</strain>
        <tissue>Petal</tissue>
    </source>
</reference>
<feature type="signal peptide" evidence="5">
    <location>
        <begin position="1"/>
        <end position="20"/>
    </location>
</feature>
<feature type="propeptide" id="PRO_0000026449" description="Activation peptide" evidence="1">
    <location>
        <begin position="21"/>
        <end position="133"/>
    </location>
</feature>
<feature type="chain" id="PRO_0000026450" description="Thiol protease SEN102">
    <location>
        <begin position="134"/>
        <end position="360"/>
    </location>
</feature>
<feature type="short sequence motif" description="Prevents secretion from ER" evidence="10">
    <location>
        <begin position="357"/>
        <end position="360"/>
    </location>
</feature>
<feature type="active site" evidence="7">
    <location>
        <position position="154"/>
    </location>
</feature>
<feature type="active site" evidence="8">
    <location>
        <position position="289"/>
    </location>
</feature>
<feature type="active site" evidence="9">
    <location>
        <position position="310"/>
    </location>
</feature>
<feature type="glycosylation site" description="N-linked (GlcNAc...) asparagine" evidence="6">
    <location>
        <position position="353"/>
    </location>
</feature>
<feature type="disulfide bond" evidence="2">
    <location>
        <begin position="151"/>
        <end position="193"/>
    </location>
</feature>
<feature type="disulfide bond" evidence="3">
    <location>
        <begin position="185"/>
        <end position="225"/>
    </location>
</feature>
<feature type="disulfide bond" evidence="3">
    <location>
        <begin position="283"/>
        <end position="335"/>
    </location>
</feature>
<protein>
    <recommendedName>
        <fullName>Thiol protease SEN102</fullName>
        <ecNumber evidence="4">3.4.22.-</ecNumber>
    </recommendedName>
</protein>
<accession>P43156</accession>
<dbReference type="EC" id="3.4.22.-" evidence="4"/>
<dbReference type="EMBL" id="X74406">
    <property type="protein sequence ID" value="CAA52425.1"/>
    <property type="molecule type" value="mRNA"/>
</dbReference>
<dbReference type="PIR" id="S57777">
    <property type="entry name" value="S57777"/>
</dbReference>
<dbReference type="SMR" id="P43156"/>
<dbReference type="MEROPS" id="C01.168"/>
<dbReference type="MEROPS" id="I29.003"/>
<dbReference type="GlyCosmos" id="P43156">
    <property type="glycosylation" value="1 site, No reported glycans"/>
</dbReference>
<dbReference type="GO" id="GO:0005788">
    <property type="term" value="C:endoplasmic reticulum lumen"/>
    <property type="evidence" value="ECO:0007669"/>
    <property type="project" value="UniProtKB-SubCell"/>
</dbReference>
<dbReference type="GO" id="GO:0008234">
    <property type="term" value="F:cysteine-type peptidase activity"/>
    <property type="evidence" value="ECO:0007669"/>
    <property type="project" value="UniProtKB-KW"/>
</dbReference>
<dbReference type="GO" id="GO:0006508">
    <property type="term" value="P:proteolysis"/>
    <property type="evidence" value="ECO:0007669"/>
    <property type="project" value="UniProtKB-KW"/>
</dbReference>
<dbReference type="CDD" id="cd02248">
    <property type="entry name" value="Peptidase_C1A"/>
    <property type="match status" value="1"/>
</dbReference>
<dbReference type="FunFam" id="3.90.70.10:FF:000023">
    <property type="entry name" value="Senescence-specific cysteine protease SAG39"/>
    <property type="match status" value="1"/>
</dbReference>
<dbReference type="Gene3D" id="3.90.70.10">
    <property type="entry name" value="Cysteine proteinases"/>
    <property type="match status" value="1"/>
</dbReference>
<dbReference type="InterPro" id="IPR038765">
    <property type="entry name" value="Papain-like_cys_pep_sf"/>
</dbReference>
<dbReference type="InterPro" id="IPR025661">
    <property type="entry name" value="Pept_asp_AS"/>
</dbReference>
<dbReference type="InterPro" id="IPR000169">
    <property type="entry name" value="Pept_cys_AS"/>
</dbReference>
<dbReference type="InterPro" id="IPR025660">
    <property type="entry name" value="Pept_his_AS"/>
</dbReference>
<dbReference type="InterPro" id="IPR013128">
    <property type="entry name" value="Peptidase_C1A"/>
</dbReference>
<dbReference type="InterPro" id="IPR000668">
    <property type="entry name" value="Peptidase_C1A_C"/>
</dbReference>
<dbReference type="InterPro" id="IPR039417">
    <property type="entry name" value="Peptidase_C1A_papain-like"/>
</dbReference>
<dbReference type="InterPro" id="IPR013201">
    <property type="entry name" value="Prot_inhib_I29"/>
</dbReference>
<dbReference type="PANTHER" id="PTHR12411">
    <property type="entry name" value="CYSTEINE PROTEASE FAMILY C1-RELATED"/>
    <property type="match status" value="1"/>
</dbReference>
<dbReference type="Pfam" id="PF08246">
    <property type="entry name" value="Inhibitor_I29"/>
    <property type="match status" value="1"/>
</dbReference>
<dbReference type="Pfam" id="PF00112">
    <property type="entry name" value="Peptidase_C1"/>
    <property type="match status" value="1"/>
</dbReference>
<dbReference type="PRINTS" id="PR00705">
    <property type="entry name" value="PAPAIN"/>
</dbReference>
<dbReference type="SMART" id="SM00848">
    <property type="entry name" value="Inhibitor_I29"/>
    <property type="match status" value="1"/>
</dbReference>
<dbReference type="SMART" id="SM00645">
    <property type="entry name" value="Pept_C1"/>
    <property type="match status" value="1"/>
</dbReference>
<dbReference type="SUPFAM" id="SSF54001">
    <property type="entry name" value="Cysteine proteinases"/>
    <property type="match status" value="1"/>
</dbReference>
<dbReference type="PROSITE" id="PS00014">
    <property type="entry name" value="ER_TARGET"/>
    <property type="match status" value="1"/>
</dbReference>
<dbReference type="PROSITE" id="PS00640">
    <property type="entry name" value="THIOL_PROTEASE_ASN"/>
    <property type="match status" value="1"/>
</dbReference>
<dbReference type="PROSITE" id="PS00139">
    <property type="entry name" value="THIOL_PROTEASE_CYS"/>
    <property type="match status" value="1"/>
</dbReference>
<dbReference type="PROSITE" id="PS00639">
    <property type="entry name" value="THIOL_PROTEASE_HIS"/>
    <property type="match status" value="1"/>
</dbReference>
<organism>
    <name type="scientific">Hemerocallis sp.</name>
    <name type="common">Daylily</name>
    <dbReference type="NCBI Taxonomy" id="29711"/>
    <lineage>
        <taxon>Eukaryota</taxon>
        <taxon>Viridiplantae</taxon>
        <taxon>Streptophyta</taxon>
        <taxon>Embryophyta</taxon>
        <taxon>Tracheophyta</taxon>
        <taxon>Spermatophyta</taxon>
        <taxon>Magnoliopsida</taxon>
        <taxon>Liliopsida</taxon>
        <taxon>Asparagales</taxon>
        <taxon>Asphodelaceae</taxon>
        <taxon>Hemerocallidoideae</taxon>
        <taxon>Hemerocallis</taxon>
    </lineage>
</organism>
<name>CYSP_HEMSP</name>
<comment type="subcellular location">
    <subcellularLocation>
        <location evidence="10">Endoplasmic reticulum lumen</location>
    </subcellularLocation>
</comment>
<comment type="similarity">
    <text evidence="7 8 9">Belongs to the peptidase C1 family.</text>
</comment>
<sequence>MAKPKFIALALVALSFLSIAQSIPFTEKDLASEDSLWNLYEKWRTHHTVARDLDEKNRRFNVFKENVKFIHEFNQKKDAPYKLALNKFGDMTNQEFRSKYAGSKIQHHRSQRGIQKNTGSFMYENVGSLPAASIDWRAKGAVTGVKDQGQCGSCWAFSTIASVEGINQIKTGELVSLSEQELVDCDTSYNEGCNGGLMDYAFEFIQKNGITTEDSYPYAEQDGTCASNLLNSPVVSIDGHQDVPANNENALMQAVANQPISVSIEASGYGFQFYSEGVFTGRCGTELDHGVAIVGYGATRDGTKYWIVKNSWGEEWGESGYIRMQRGISDKRGKCGIAMEASYPIKTSANPKNSSTRDEL</sequence>
<proteinExistence type="evidence at transcript level"/>
<keyword id="KW-1015">Disulfide bond</keyword>
<keyword id="KW-0256">Endoplasmic reticulum</keyword>
<keyword id="KW-0325">Glycoprotein</keyword>
<keyword id="KW-0378">Hydrolase</keyword>
<keyword id="KW-0645">Protease</keyword>
<keyword id="KW-0732">Signal</keyword>
<keyword id="KW-0788">Thiol protease</keyword>
<keyword id="KW-0865">Zymogen</keyword>